<accession>B1IPZ6</accession>
<protein>
    <recommendedName>
        <fullName evidence="1">Small ribosomal subunit protein uS5</fullName>
    </recommendedName>
    <alternativeName>
        <fullName evidence="2">30S ribosomal protein S5</fullName>
    </alternativeName>
</protein>
<gene>
    <name evidence="1" type="primary">rpsE</name>
    <name type="ordered locus">EcolC_0410</name>
</gene>
<evidence type="ECO:0000255" key="1">
    <source>
        <dbReference type="HAMAP-Rule" id="MF_01307"/>
    </source>
</evidence>
<evidence type="ECO:0000305" key="2"/>
<comment type="function">
    <text evidence="1">With S4 and S12 plays an important role in translational accuracy.</text>
</comment>
<comment type="function">
    <text evidence="1">Located at the back of the 30S subunit body where it stabilizes the conformation of the head with respect to the body.</text>
</comment>
<comment type="subunit">
    <text evidence="1">Part of the 30S ribosomal subunit. Contacts proteins S4 and S8.</text>
</comment>
<comment type="domain">
    <text>The N-terminal domain interacts with the head of the 30S subunit; the C-terminal domain interacts with the body and contacts protein S4. The interaction surface between S4 and S5 is involved in control of translational fidelity.</text>
</comment>
<comment type="similarity">
    <text evidence="1">Belongs to the universal ribosomal protein uS5 family.</text>
</comment>
<name>RS5_ECOLC</name>
<dbReference type="EMBL" id="CP000946">
    <property type="protein sequence ID" value="ACA76088.1"/>
    <property type="molecule type" value="Genomic_DNA"/>
</dbReference>
<dbReference type="RefSeq" id="WP_000940121.1">
    <property type="nucleotide sequence ID" value="NZ_MTFT01000014.1"/>
</dbReference>
<dbReference type="SMR" id="B1IPZ6"/>
<dbReference type="GeneID" id="93778684"/>
<dbReference type="KEGG" id="ecl:EcolC_0410"/>
<dbReference type="HOGENOM" id="CLU_065898_2_2_6"/>
<dbReference type="GO" id="GO:0015935">
    <property type="term" value="C:small ribosomal subunit"/>
    <property type="evidence" value="ECO:0007669"/>
    <property type="project" value="InterPro"/>
</dbReference>
<dbReference type="GO" id="GO:0019843">
    <property type="term" value="F:rRNA binding"/>
    <property type="evidence" value="ECO:0007669"/>
    <property type="project" value="UniProtKB-UniRule"/>
</dbReference>
<dbReference type="GO" id="GO:0003735">
    <property type="term" value="F:structural constituent of ribosome"/>
    <property type="evidence" value="ECO:0007669"/>
    <property type="project" value="InterPro"/>
</dbReference>
<dbReference type="GO" id="GO:0006412">
    <property type="term" value="P:translation"/>
    <property type="evidence" value="ECO:0007669"/>
    <property type="project" value="UniProtKB-UniRule"/>
</dbReference>
<dbReference type="FunFam" id="3.30.160.20:FF:000001">
    <property type="entry name" value="30S ribosomal protein S5"/>
    <property type="match status" value="1"/>
</dbReference>
<dbReference type="FunFam" id="3.30.230.10:FF:000002">
    <property type="entry name" value="30S ribosomal protein S5"/>
    <property type="match status" value="1"/>
</dbReference>
<dbReference type="Gene3D" id="3.30.160.20">
    <property type="match status" value="1"/>
</dbReference>
<dbReference type="Gene3D" id="3.30.230.10">
    <property type="match status" value="1"/>
</dbReference>
<dbReference type="HAMAP" id="MF_01307_B">
    <property type="entry name" value="Ribosomal_uS5_B"/>
    <property type="match status" value="1"/>
</dbReference>
<dbReference type="InterPro" id="IPR020568">
    <property type="entry name" value="Ribosomal_Su5_D2-typ_SF"/>
</dbReference>
<dbReference type="InterPro" id="IPR000851">
    <property type="entry name" value="Ribosomal_uS5"/>
</dbReference>
<dbReference type="InterPro" id="IPR005712">
    <property type="entry name" value="Ribosomal_uS5_bac-type"/>
</dbReference>
<dbReference type="InterPro" id="IPR005324">
    <property type="entry name" value="Ribosomal_uS5_C"/>
</dbReference>
<dbReference type="InterPro" id="IPR013810">
    <property type="entry name" value="Ribosomal_uS5_N"/>
</dbReference>
<dbReference type="InterPro" id="IPR018192">
    <property type="entry name" value="Ribosomal_uS5_N_CS"/>
</dbReference>
<dbReference type="InterPro" id="IPR014721">
    <property type="entry name" value="Ribsml_uS5_D2-typ_fold_subgr"/>
</dbReference>
<dbReference type="NCBIfam" id="TIGR01021">
    <property type="entry name" value="rpsE_bact"/>
    <property type="match status" value="1"/>
</dbReference>
<dbReference type="PANTHER" id="PTHR48277">
    <property type="entry name" value="MITOCHONDRIAL RIBOSOMAL PROTEIN S5"/>
    <property type="match status" value="1"/>
</dbReference>
<dbReference type="PANTHER" id="PTHR48277:SF1">
    <property type="entry name" value="MITOCHONDRIAL RIBOSOMAL PROTEIN S5"/>
    <property type="match status" value="1"/>
</dbReference>
<dbReference type="Pfam" id="PF00333">
    <property type="entry name" value="Ribosomal_S5"/>
    <property type="match status" value="1"/>
</dbReference>
<dbReference type="Pfam" id="PF03719">
    <property type="entry name" value="Ribosomal_S5_C"/>
    <property type="match status" value="1"/>
</dbReference>
<dbReference type="SUPFAM" id="SSF54768">
    <property type="entry name" value="dsRNA-binding domain-like"/>
    <property type="match status" value="1"/>
</dbReference>
<dbReference type="SUPFAM" id="SSF54211">
    <property type="entry name" value="Ribosomal protein S5 domain 2-like"/>
    <property type="match status" value="1"/>
</dbReference>
<dbReference type="PROSITE" id="PS00585">
    <property type="entry name" value="RIBOSOMAL_S5"/>
    <property type="match status" value="1"/>
</dbReference>
<dbReference type="PROSITE" id="PS50881">
    <property type="entry name" value="S5_DSRBD"/>
    <property type="match status" value="1"/>
</dbReference>
<reference key="1">
    <citation type="submission" date="2008-02" db="EMBL/GenBank/DDBJ databases">
        <title>Complete sequence of Escherichia coli C str. ATCC 8739.</title>
        <authorList>
            <person name="Copeland A."/>
            <person name="Lucas S."/>
            <person name="Lapidus A."/>
            <person name="Glavina del Rio T."/>
            <person name="Dalin E."/>
            <person name="Tice H."/>
            <person name="Bruce D."/>
            <person name="Goodwin L."/>
            <person name="Pitluck S."/>
            <person name="Kiss H."/>
            <person name="Brettin T."/>
            <person name="Detter J.C."/>
            <person name="Han C."/>
            <person name="Kuske C.R."/>
            <person name="Schmutz J."/>
            <person name="Larimer F."/>
            <person name="Land M."/>
            <person name="Hauser L."/>
            <person name="Kyrpides N."/>
            <person name="Mikhailova N."/>
            <person name="Ingram L."/>
            <person name="Richardson P."/>
        </authorList>
    </citation>
    <scope>NUCLEOTIDE SEQUENCE [LARGE SCALE GENOMIC DNA]</scope>
    <source>
        <strain>ATCC 8739 / DSM 1576 / NBRC 3972 / NCIMB 8545 / WDCM 00012 / Crooks</strain>
    </source>
</reference>
<sequence>MAHIEKQAGELQEKLIAVNRVSKTVKGGRIFSFTALTVVGDGNGRVGFGYGKAREVPAAIQKAMEKARRNMINVALNNGTLQHPVKGVHTGSRVFMQPASEGTGIIAGGAMRAVLEVAGVHNVLAKAYGSTNPINVVRATIDGLENMNSPEMVAAKRGKSVEEILGK</sequence>
<feature type="chain" id="PRO_1000086007" description="Small ribosomal subunit protein uS5">
    <location>
        <begin position="1"/>
        <end position="167"/>
    </location>
</feature>
<feature type="domain" description="S5 DRBM" evidence="1">
    <location>
        <begin position="11"/>
        <end position="74"/>
    </location>
</feature>
<proteinExistence type="inferred from homology"/>
<organism>
    <name type="scientific">Escherichia coli (strain ATCC 8739 / DSM 1576 / NBRC 3972 / NCIMB 8545 / WDCM 00012 / Crooks)</name>
    <dbReference type="NCBI Taxonomy" id="481805"/>
    <lineage>
        <taxon>Bacteria</taxon>
        <taxon>Pseudomonadati</taxon>
        <taxon>Pseudomonadota</taxon>
        <taxon>Gammaproteobacteria</taxon>
        <taxon>Enterobacterales</taxon>
        <taxon>Enterobacteriaceae</taxon>
        <taxon>Escherichia</taxon>
    </lineage>
</organism>
<keyword id="KW-0687">Ribonucleoprotein</keyword>
<keyword id="KW-0689">Ribosomal protein</keyword>
<keyword id="KW-0694">RNA-binding</keyword>
<keyword id="KW-0699">rRNA-binding</keyword>